<feature type="chain" id="PRO_0000303803" description="Exodeoxyribonuclease 7 large subunit">
    <location>
        <begin position="1"/>
        <end position="411"/>
    </location>
</feature>
<accession>Q1B4H2</accession>
<protein>
    <recommendedName>
        <fullName evidence="1">Exodeoxyribonuclease 7 large subunit</fullName>
        <ecNumber evidence="1">3.1.11.6</ecNumber>
    </recommendedName>
    <alternativeName>
        <fullName evidence="1">Exodeoxyribonuclease VII large subunit</fullName>
        <shortName evidence="1">Exonuclease VII large subunit</shortName>
    </alternativeName>
</protein>
<name>EX7L_MYCSS</name>
<proteinExistence type="inferred from homology"/>
<comment type="function">
    <text evidence="1">Bidirectionally degrades single-stranded DNA into large acid-insoluble oligonucleotides, which are then degraded further into small acid-soluble oligonucleotides.</text>
</comment>
<comment type="catalytic activity">
    <reaction evidence="1">
        <text>Exonucleolytic cleavage in either 5'- to 3'- or 3'- to 5'-direction to yield nucleoside 5'-phosphates.</text>
        <dbReference type="EC" id="3.1.11.6"/>
    </reaction>
</comment>
<comment type="subunit">
    <text evidence="1">Heterooligomer composed of large and small subunits.</text>
</comment>
<comment type="subcellular location">
    <subcellularLocation>
        <location evidence="1">Cytoplasm</location>
    </subcellularLocation>
</comment>
<comment type="similarity">
    <text evidence="1">Belongs to the XseA family.</text>
</comment>
<keyword id="KW-0963">Cytoplasm</keyword>
<keyword id="KW-0269">Exonuclease</keyword>
<keyword id="KW-0378">Hydrolase</keyword>
<keyword id="KW-0540">Nuclease</keyword>
<organism>
    <name type="scientific">Mycobacterium sp. (strain MCS)</name>
    <dbReference type="NCBI Taxonomy" id="164756"/>
    <lineage>
        <taxon>Bacteria</taxon>
        <taxon>Bacillati</taxon>
        <taxon>Actinomycetota</taxon>
        <taxon>Actinomycetes</taxon>
        <taxon>Mycobacteriales</taxon>
        <taxon>Mycobacteriaceae</taxon>
        <taxon>Mycobacterium</taxon>
    </lineage>
</organism>
<evidence type="ECO:0000255" key="1">
    <source>
        <dbReference type="HAMAP-Rule" id="MF_00378"/>
    </source>
</evidence>
<sequence>MTTPADDQGKSPENPWPVRAVATRVAKYIDRLGMVWIEGQLTELKIRQTTAWMVLRDPAADMSLSVSCPRDLVANAPVPLSEGTQVIVLGKPQFYTRNGSFSLRISEIRAVGIGELLARIDRLRRLLDAEGLFDPRLKRPIPFLPGTIGLITGRASHAERDVMTVAANRWPAVRFAVRNTIVQGPNAVPQIVGALRELDRDPGVDVIVLARGGGSVEDLLPFSDETLCREIASCTTPVVSAVGHEPDNPLCDLVADLRAATPTDAAKRVVPDAAAEQAFVTDLRRRSARALRQWVHREQHHLDQLRSRPVLARPLQAIDARADEVHRAVAAARRDVRRMVTVESERVGHLSARLTTLGPAATLARGYAVVQTMPDTNVLRTTADAPAGTHLRIRVADGAITAVSEGTDEAH</sequence>
<reference key="1">
    <citation type="submission" date="2006-06" db="EMBL/GenBank/DDBJ databases">
        <title>Complete sequence of chromosome of Mycobacterium sp. MCS.</title>
        <authorList>
            <consortium name="US DOE Joint Genome Institute"/>
            <person name="Copeland A."/>
            <person name="Lucas S."/>
            <person name="Lapidus A."/>
            <person name="Barry K."/>
            <person name="Detter J.C."/>
            <person name="Glavina del Rio T."/>
            <person name="Hammon N."/>
            <person name="Israni S."/>
            <person name="Dalin E."/>
            <person name="Tice H."/>
            <person name="Pitluck S."/>
            <person name="Martinez M."/>
            <person name="Schmutz J."/>
            <person name="Larimer F."/>
            <person name="Land M."/>
            <person name="Hauser L."/>
            <person name="Kyrpides N."/>
            <person name="Kim E."/>
            <person name="Miller C.D."/>
            <person name="Hughes J.E."/>
            <person name="Anderson A.J."/>
            <person name="Sims R.C."/>
            <person name="Richardson P."/>
        </authorList>
    </citation>
    <scope>NUCLEOTIDE SEQUENCE [LARGE SCALE GENOMIC DNA]</scope>
    <source>
        <strain>MCS</strain>
    </source>
</reference>
<dbReference type="EC" id="3.1.11.6" evidence="1"/>
<dbReference type="EMBL" id="CP000384">
    <property type="protein sequence ID" value="ABG10212.1"/>
    <property type="molecule type" value="Genomic_DNA"/>
</dbReference>
<dbReference type="SMR" id="Q1B4H2"/>
<dbReference type="KEGG" id="mmc:Mmcs_4107"/>
<dbReference type="HOGENOM" id="CLU_023625_2_1_11"/>
<dbReference type="BioCyc" id="MSP164756:G1G6O-4194-MONOMER"/>
<dbReference type="GO" id="GO:0005737">
    <property type="term" value="C:cytoplasm"/>
    <property type="evidence" value="ECO:0007669"/>
    <property type="project" value="UniProtKB-SubCell"/>
</dbReference>
<dbReference type="GO" id="GO:0009318">
    <property type="term" value="C:exodeoxyribonuclease VII complex"/>
    <property type="evidence" value="ECO:0007669"/>
    <property type="project" value="InterPro"/>
</dbReference>
<dbReference type="GO" id="GO:0008855">
    <property type="term" value="F:exodeoxyribonuclease VII activity"/>
    <property type="evidence" value="ECO:0007669"/>
    <property type="project" value="UniProtKB-UniRule"/>
</dbReference>
<dbReference type="GO" id="GO:0003676">
    <property type="term" value="F:nucleic acid binding"/>
    <property type="evidence" value="ECO:0007669"/>
    <property type="project" value="InterPro"/>
</dbReference>
<dbReference type="GO" id="GO:0006308">
    <property type="term" value="P:DNA catabolic process"/>
    <property type="evidence" value="ECO:0007669"/>
    <property type="project" value="UniProtKB-UniRule"/>
</dbReference>
<dbReference type="CDD" id="cd04489">
    <property type="entry name" value="ExoVII_LU_OBF"/>
    <property type="match status" value="1"/>
</dbReference>
<dbReference type="HAMAP" id="MF_00378">
    <property type="entry name" value="Exonuc_7_L"/>
    <property type="match status" value="1"/>
</dbReference>
<dbReference type="InterPro" id="IPR003753">
    <property type="entry name" value="Exonuc_VII_L"/>
</dbReference>
<dbReference type="InterPro" id="IPR020579">
    <property type="entry name" value="Exonuc_VII_lsu_C"/>
</dbReference>
<dbReference type="InterPro" id="IPR025824">
    <property type="entry name" value="OB-fold_nuc-bd_dom"/>
</dbReference>
<dbReference type="NCBIfam" id="TIGR00237">
    <property type="entry name" value="xseA"/>
    <property type="match status" value="1"/>
</dbReference>
<dbReference type="PANTHER" id="PTHR30008">
    <property type="entry name" value="EXODEOXYRIBONUCLEASE 7 LARGE SUBUNIT"/>
    <property type="match status" value="1"/>
</dbReference>
<dbReference type="PANTHER" id="PTHR30008:SF0">
    <property type="entry name" value="EXODEOXYRIBONUCLEASE 7 LARGE SUBUNIT"/>
    <property type="match status" value="1"/>
</dbReference>
<dbReference type="Pfam" id="PF02601">
    <property type="entry name" value="Exonuc_VII_L"/>
    <property type="match status" value="2"/>
</dbReference>
<dbReference type="Pfam" id="PF13742">
    <property type="entry name" value="tRNA_anti_2"/>
    <property type="match status" value="1"/>
</dbReference>
<gene>
    <name evidence="1" type="primary">xseA</name>
    <name type="ordered locus">Mmcs_4107</name>
</gene>